<proteinExistence type="inferred from homology"/>
<organism>
    <name type="scientific">Dictyostelium discoideum</name>
    <name type="common">Social amoeba</name>
    <dbReference type="NCBI Taxonomy" id="44689"/>
    <lineage>
        <taxon>Eukaryota</taxon>
        <taxon>Amoebozoa</taxon>
        <taxon>Evosea</taxon>
        <taxon>Eumycetozoa</taxon>
        <taxon>Dictyostelia</taxon>
        <taxon>Dictyosteliales</taxon>
        <taxon>Dictyosteliaceae</taxon>
        <taxon>Dictyostelium</taxon>
    </lineage>
</organism>
<reference key="1">
    <citation type="journal article" date="2005" name="Nature">
        <title>The genome of the social amoeba Dictyostelium discoideum.</title>
        <authorList>
            <person name="Eichinger L."/>
            <person name="Pachebat J.A."/>
            <person name="Gloeckner G."/>
            <person name="Rajandream M.A."/>
            <person name="Sucgang R."/>
            <person name="Berriman M."/>
            <person name="Song J."/>
            <person name="Olsen R."/>
            <person name="Szafranski K."/>
            <person name="Xu Q."/>
            <person name="Tunggal B."/>
            <person name="Kummerfeld S."/>
            <person name="Madera M."/>
            <person name="Konfortov B.A."/>
            <person name="Rivero F."/>
            <person name="Bankier A.T."/>
            <person name="Lehmann R."/>
            <person name="Hamlin N."/>
            <person name="Davies R."/>
            <person name="Gaudet P."/>
            <person name="Fey P."/>
            <person name="Pilcher K."/>
            <person name="Chen G."/>
            <person name="Saunders D."/>
            <person name="Sodergren E.J."/>
            <person name="Davis P."/>
            <person name="Kerhornou A."/>
            <person name="Nie X."/>
            <person name="Hall N."/>
            <person name="Anjard C."/>
            <person name="Hemphill L."/>
            <person name="Bason N."/>
            <person name="Farbrother P."/>
            <person name="Desany B."/>
            <person name="Just E."/>
            <person name="Morio T."/>
            <person name="Rost R."/>
            <person name="Churcher C.M."/>
            <person name="Cooper J."/>
            <person name="Haydock S."/>
            <person name="van Driessche N."/>
            <person name="Cronin A."/>
            <person name="Goodhead I."/>
            <person name="Muzny D.M."/>
            <person name="Mourier T."/>
            <person name="Pain A."/>
            <person name="Lu M."/>
            <person name="Harper D."/>
            <person name="Lindsay R."/>
            <person name="Hauser H."/>
            <person name="James K.D."/>
            <person name="Quiles M."/>
            <person name="Madan Babu M."/>
            <person name="Saito T."/>
            <person name="Buchrieser C."/>
            <person name="Wardroper A."/>
            <person name="Felder M."/>
            <person name="Thangavelu M."/>
            <person name="Johnson D."/>
            <person name="Knights A."/>
            <person name="Loulseged H."/>
            <person name="Mungall K.L."/>
            <person name="Oliver K."/>
            <person name="Price C."/>
            <person name="Quail M.A."/>
            <person name="Urushihara H."/>
            <person name="Hernandez J."/>
            <person name="Rabbinowitsch E."/>
            <person name="Steffen D."/>
            <person name="Sanders M."/>
            <person name="Ma J."/>
            <person name="Kohara Y."/>
            <person name="Sharp S."/>
            <person name="Simmonds M.N."/>
            <person name="Spiegler S."/>
            <person name="Tivey A."/>
            <person name="Sugano S."/>
            <person name="White B."/>
            <person name="Walker D."/>
            <person name="Woodward J.R."/>
            <person name="Winckler T."/>
            <person name="Tanaka Y."/>
            <person name="Shaulsky G."/>
            <person name="Schleicher M."/>
            <person name="Weinstock G.M."/>
            <person name="Rosenthal A."/>
            <person name="Cox E.C."/>
            <person name="Chisholm R.L."/>
            <person name="Gibbs R.A."/>
            <person name="Loomis W.F."/>
            <person name="Platzer M."/>
            <person name="Kay R.R."/>
            <person name="Williams J.G."/>
            <person name="Dear P.H."/>
            <person name="Noegel A.A."/>
            <person name="Barrell B.G."/>
            <person name="Kuspa A."/>
        </authorList>
    </citation>
    <scope>NUCLEOTIDE SEQUENCE [LARGE SCALE GENOMIC DNA]</scope>
    <source>
        <strain>AX4</strain>
    </source>
</reference>
<gene>
    <name type="primary">eny2</name>
    <name type="ORF">DDB_G0289573</name>
</gene>
<comment type="function">
    <text evidence="1">Involved in mRNA export coupled transcription activation by association with both the TREX-2 and the SAGA complexes. The transcription regulatory histone acetylation (HAT) complex SAGA is a multiprotein complex that activates transcription by remodeling chromatin and mediating histone acetylation and deubiquitination. Within the SAGA complex, participates in a subcomplex that specifically deubiquitinates histones. The SAGA complex is recruited to specific gene promoters by activators, where it is required for transcription. The TREX-2 complex functions in docking export-competent ribonucleoprotein particles (mRNPs) to the nuclear entrance of the nuclear pore complex (nuclear basket). TREX-2 participates in mRNA export and accurate chromatin positioning in the nucleus by tethering genes to the nuclear periphery (By similarity).</text>
</comment>
<comment type="subunit">
    <text evidence="1">Component of the nuclear pore complex (NPC)-associated TREX-2 complex (transcription and export complex 2). Component of the SAGA transcription coactivator-HAT complex. Within the SAGA complex, participates in a subcomplex of SAGA called the DUB module (deubiquitination module) (By similarity).</text>
</comment>
<comment type="subcellular location">
    <subcellularLocation>
        <location evidence="2">Nucleus</location>
        <location evidence="2">Nucleoplasm</location>
    </subcellularLocation>
</comment>
<comment type="similarity">
    <text evidence="2">Belongs to the ENY2 family.</text>
</comment>
<accession>Q54HB4</accession>
<name>ENY2_DICDI</name>
<sequence length="123" mass="14234">MASTTTTILPKDHIKLRSTIHQKLIESGEKERLKVLLKSKLVEGGWRDEVKIACREYIKNNQNENFKIEDLIALITPIAKKKVPPQVKADLIKRIRKFLGPNIQNHHHHHIHIQSNTPNSPHH</sequence>
<feature type="chain" id="PRO_0000327964" description="Transcription and mRNA export factor ENY2">
    <location>
        <begin position="1"/>
        <end position="123"/>
    </location>
</feature>
<protein>
    <recommendedName>
        <fullName evidence="2">Transcription and mRNA export factor ENY2</fullName>
    </recommendedName>
    <alternativeName>
        <fullName evidence="2">Enhancer of yellow 2 transcription factor homolog</fullName>
    </alternativeName>
</protein>
<keyword id="KW-0010">Activator</keyword>
<keyword id="KW-0156">Chromatin regulator</keyword>
<keyword id="KW-0509">mRNA transport</keyword>
<keyword id="KW-0539">Nucleus</keyword>
<keyword id="KW-0653">Protein transport</keyword>
<keyword id="KW-1185">Reference proteome</keyword>
<keyword id="KW-0804">Transcription</keyword>
<keyword id="KW-0805">Transcription regulation</keyword>
<keyword id="KW-0811">Translocation</keyword>
<keyword id="KW-0813">Transport</keyword>
<dbReference type="EMBL" id="AAFI02000145">
    <property type="protein sequence ID" value="EAL62653.1"/>
    <property type="molecule type" value="Genomic_DNA"/>
</dbReference>
<dbReference type="RefSeq" id="XP_636159.1">
    <property type="nucleotide sequence ID" value="XM_631067.1"/>
</dbReference>
<dbReference type="SMR" id="Q54HB4"/>
<dbReference type="FunCoup" id="Q54HB4">
    <property type="interactions" value="236"/>
</dbReference>
<dbReference type="STRING" id="44689.Q54HB4"/>
<dbReference type="PaxDb" id="44689-DDB0266473"/>
<dbReference type="EnsemblProtists" id="EAL62653">
    <property type="protein sequence ID" value="EAL62653"/>
    <property type="gene ID" value="DDB_G0289573"/>
</dbReference>
<dbReference type="GeneID" id="8627213"/>
<dbReference type="KEGG" id="ddi:DDB_G0289573"/>
<dbReference type="dictyBase" id="DDB_G0289573"/>
<dbReference type="VEuPathDB" id="AmoebaDB:DDB_G0289573"/>
<dbReference type="eggNOG" id="KOG4479">
    <property type="taxonomic scope" value="Eukaryota"/>
</dbReference>
<dbReference type="HOGENOM" id="CLU_134052_2_0_1"/>
<dbReference type="InParanoid" id="Q54HB4"/>
<dbReference type="OMA" id="KLIECAW"/>
<dbReference type="PhylomeDB" id="Q54HB4"/>
<dbReference type="PRO" id="PR:Q54HB4"/>
<dbReference type="Proteomes" id="UP000002195">
    <property type="component" value="Chromosome 5"/>
</dbReference>
<dbReference type="GO" id="GO:0071819">
    <property type="term" value="C:DUBm complex"/>
    <property type="evidence" value="ECO:0000318"/>
    <property type="project" value="GO_Central"/>
</dbReference>
<dbReference type="GO" id="GO:0005643">
    <property type="term" value="C:nuclear pore"/>
    <property type="evidence" value="ECO:0007669"/>
    <property type="project" value="UniProtKB-UniRule"/>
</dbReference>
<dbReference type="GO" id="GO:0005654">
    <property type="term" value="C:nucleoplasm"/>
    <property type="evidence" value="ECO:0007669"/>
    <property type="project" value="UniProtKB-SubCell"/>
</dbReference>
<dbReference type="GO" id="GO:0000124">
    <property type="term" value="C:SAGA complex"/>
    <property type="evidence" value="ECO:0000318"/>
    <property type="project" value="GO_Central"/>
</dbReference>
<dbReference type="GO" id="GO:0070390">
    <property type="term" value="C:transcription export complex 2"/>
    <property type="evidence" value="ECO:0007669"/>
    <property type="project" value="UniProtKB-UniRule"/>
</dbReference>
<dbReference type="GO" id="GO:0003682">
    <property type="term" value="F:chromatin binding"/>
    <property type="evidence" value="ECO:0000318"/>
    <property type="project" value="GO_Central"/>
</dbReference>
<dbReference type="GO" id="GO:0003713">
    <property type="term" value="F:transcription coactivator activity"/>
    <property type="evidence" value="ECO:0000318"/>
    <property type="project" value="GO_Central"/>
</dbReference>
<dbReference type="GO" id="GO:0006325">
    <property type="term" value="P:chromatin organization"/>
    <property type="evidence" value="ECO:0007669"/>
    <property type="project" value="UniProtKB-KW"/>
</dbReference>
<dbReference type="GO" id="GO:0016973">
    <property type="term" value="P:poly(A)+ mRNA export from nucleus"/>
    <property type="evidence" value="ECO:0000318"/>
    <property type="project" value="GO_Central"/>
</dbReference>
<dbReference type="GO" id="GO:0015031">
    <property type="term" value="P:protein transport"/>
    <property type="evidence" value="ECO:0007669"/>
    <property type="project" value="UniProtKB-KW"/>
</dbReference>
<dbReference type="GO" id="GO:0006357">
    <property type="term" value="P:regulation of transcription by RNA polymerase II"/>
    <property type="evidence" value="ECO:0000318"/>
    <property type="project" value="GO_Central"/>
</dbReference>
<dbReference type="GO" id="GO:0006368">
    <property type="term" value="P:transcription elongation by RNA polymerase II"/>
    <property type="evidence" value="ECO:0007669"/>
    <property type="project" value="UniProtKB-UniRule"/>
</dbReference>
<dbReference type="FunFam" id="1.10.246.140:FF:000001">
    <property type="entry name" value="Transcription and mRNA export factor ENY2"/>
    <property type="match status" value="1"/>
</dbReference>
<dbReference type="Gene3D" id="1.10.246.140">
    <property type="match status" value="1"/>
</dbReference>
<dbReference type="HAMAP" id="MF_03046">
    <property type="entry name" value="ENY2_Sus1"/>
    <property type="match status" value="1"/>
</dbReference>
<dbReference type="InterPro" id="IPR018783">
    <property type="entry name" value="TF_ENY2"/>
</dbReference>
<dbReference type="InterPro" id="IPR038212">
    <property type="entry name" value="TF_EnY2_sf"/>
</dbReference>
<dbReference type="PANTHER" id="PTHR12514">
    <property type="entry name" value="ENHANCER OF YELLOW 2 TRANSCRIPTION FACTOR"/>
    <property type="match status" value="1"/>
</dbReference>
<dbReference type="Pfam" id="PF10163">
    <property type="entry name" value="EnY2"/>
    <property type="match status" value="1"/>
</dbReference>
<evidence type="ECO:0000250" key="1"/>
<evidence type="ECO:0000255" key="2">
    <source>
        <dbReference type="HAMAP-Rule" id="MF_03046"/>
    </source>
</evidence>